<evidence type="ECO:0000255" key="1">
    <source>
        <dbReference type="HAMAP-Rule" id="MF_01642"/>
    </source>
</evidence>
<dbReference type="EC" id="2.6.1.83" evidence="1"/>
<dbReference type="EMBL" id="AP008230">
    <property type="protein sequence ID" value="BAE85191.1"/>
    <property type="molecule type" value="Genomic_DNA"/>
</dbReference>
<dbReference type="RefSeq" id="WP_011461084.1">
    <property type="nucleotide sequence ID" value="NC_007907.1"/>
</dbReference>
<dbReference type="SMR" id="Q24S01"/>
<dbReference type="STRING" id="138119.DSY3402"/>
<dbReference type="KEGG" id="dsy:DSY3402"/>
<dbReference type="eggNOG" id="COG0436">
    <property type="taxonomic scope" value="Bacteria"/>
</dbReference>
<dbReference type="HOGENOM" id="CLU_051433_0_0_9"/>
<dbReference type="UniPathway" id="UPA00034">
    <property type="reaction ID" value="UER00466"/>
</dbReference>
<dbReference type="Proteomes" id="UP000001946">
    <property type="component" value="Chromosome"/>
</dbReference>
<dbReference type="GO" id="GO:0010285">
    <property type="term" value="F:L,L-diaminopimelate aminotransferase activity"/>
    <property type="evidence" value="ECO:0007669"/>
    <property type="project" value="UniProtKB-UniRule"/>
</dbReference>
<dbReference type="GO" id="GO:0030170">
    <property type="term" value="F:pyridoxal phosphate binding"/>
    <property type="evidence" value="ECO:0007669"/>
    <property type="project" value="UniProtKB-UniRule"/>
</dbReference>
<dbReference type="GO" id="GO:0033362">
    <property type="term" value="P:lysine biosynthetic process via diaminopimelate, diaminopimelate-aminotransferase pathway"/>
    <property type="evidence" value="ECO:0007669"/>
    <property type="project" value="UniProtKB-UniRule"/>
</dbReference>
<dbReference type="CDD" id="cd00609">
    <property type="entry name" value="AAT_like"/>
    <property type="match status" value="1"/>
</dbReference>
<dbReference type="FunFam" id="3.40.640.10:FF:000099">
    <property type="entry name" value="LL-diaminopimelate aminotransferase, chloroplastic"/>
    <property type="match status" value="1"/>
</dbReference>
<dbReference type="Gene3D" id="3.90.1150.10">
    <property type="entry name" value="Aspartate Aminotransferase, domain 1"/>
    <property type="match status" value="1"/>
</dbReference>
<dbReference type="Gene3D" id="3.40.640.10">
    <property type="entry name" value="Type I PLP-dependent aspartate aminotransferase-like (Major domain)"/>
    <property type="match status" value="1"/>
</dbReference>
<dbReference type="HAMAP" id="MF_01642">
    <property type="entry name" value="DapL_aminotrans_1"/>
    <property type="match status" value="1"/>
</dbReference>
<dbReference type="InterPro" id="IPR004839">
    <property type="entry name" value="Aminotransferase_I/II_large"/>
</dbReference>
<dbReference type="InterPro" id="IPR019942">
    <property type="entry name" value="DapL/ALD1"/>
</dbReference>
<dbReference type="InterPro" id="IPR015424">
    <property type="entry name" value="PyrdxlP-dep_Trfase"/>
</dbReference>
<dbReference type="InterPro" id="IPR015421">
    <property type="entry name" value="PyrdxlP-dep_Trfase_major"/>
</dbReference>
<dbReference type="InterPro" id="IPR015422">
    <property type="entry name" value="PyrdxlP-dep_Trfase_small"/>
</dbReference>
<dbReference type="NCBIfam" id="TIGR03542">
    <property type="entry name" value="DAPAT_plant"/>
    <property type="match status" value="1"/>
</dbReference>
<dbReference type="PANTHER" id="PTHR43144">
    <property type="entry name" value="AMINOTRANSFERASE"/>
    <property type="match status" value="1"/>
</dbReference>
<dbReference type="Pfam" id="PF00155">
    <property type="entry name" value="Aminotran_1_2"/>
    <property type="match status" value="1"/>
</dbReference>
<dbReference type="SUPFAM" id="SSF53383">
    <property type="entry name" value="PLP-dependent transferases"/>
    <property type="match status" value="1"/>
</dbReference>
<name>DAPAT_DESHY</name>
<accession>Q24S01</accession>
<proteinExistence type="inferred from homology"/>
<feature type="chain" id="PRO_0000342232" description="LL-diaminopimelate aminotransferase">
    <location>
        <begin position="1"/>
        <end position="411"/>
    </location>
</feature>
<feature type="binding site" evidence="1">
    <location>
        <position position="15"/>
    </location>
    <ligand>
        <name>substrate</name>
    </ligand>
</feature>
<feature type="binding site" evidence="1">
    <location>
        <position position="42"/>
    </location>
    <ligand>
        <name>substrate</name>
    </ligand>
</feature>
<feature type="binding site" evidence="1">
    <location>
        <position position="72"/>
    </location>
    <ligand>
        <name>pyridoxal 5'-phosphate</name>
        <dbReference type="ChEBI" id="CHEBI:597326"/>
    </ligand>
</feature>
<feature type="binding site" evidence="1">
    <location>
        <begin position="108"/>
        <end position="109"/>
    </location>
    <ligand>
        <name>pyridoxal 5'-phosphate</name>
        <dbReference type="ChEBI" id="CHEBI:597326"/>
    </ligand>
</feature>
<feature type="binding site" evidence="1">
    <location>
        <position position="109"/>
    </location>
    <ligand>
        <name>substrate</name>
    </ligand>
</feature>
<feature type="binding site" evidence="1">
    <location>
        <position position="132"/>
    </location>
    <ligand>
        <name>pyridoxal 5'-phosphate</name>
        <dbReference type="ChEBI" id="CHEBI:597326"/>
    </ligand>
</feature>
<feature type="binding site" evidence="1">
    <location>
        <position position="132"/>
    </location>
    <ligand>
        <name>substrate</name>
    </ligand>
</feature>
<feature type="binding site" evidence="1">
    <location>
        <position position="188"/>
    </location>
    <ligand>
        <name>pyridoxal 5'-phosphate</name>
        <dbReference type="ChEBI" id="CHEBI:597326"/>
    </ligand>
</feature>
<feature type="binding site" evidence="1">
    <location>
        <position position="188"/>
    </location>
    <ligand>
        <name>substrate</name>
    </ligand>
</feature>
<feature type="binding site" evidence="1">
    <location>
        <position position="219"/>
    </location>
    <ligand>
        <name>pyridoxal 5'-phosphate</name>
        <dbReference type="ChEBI" id="CHEBI:597326"/>
    </ligand>
</feature>
<feature type="binding site" evidence="1">
    <location>
        <begin position="247"/>
        <end position="249"/>
    </location>
    <ligand>
        <name>pyridoxal 5'-phosphate</name>
        <dbReference type="ChEBI" id="CHEBI:597326"/>
    </ligand>
</feature>
<feature type="binding site" evidence="1">
    <location>
        <position position="258"/>
    </location>
    <ligand>
        <name>pyridoxal 5'-phosphate</name>
        <dbReference type="ChEBI" id="CHEBI:597326"/>
    </ligand>
</feature>
<feature type="binding site" evidence="1">
    <location>
        <position position="293"/>
    </location>
    <ligand>
        <name>pyridoxal 5'-phosphate</name>
        <dbReference type="ChEBI" id="CHEBI:597326"/>
    </ligand>
</feature>
<feature type="binding site" evidence="1">
    <location>
        <position position="293"/>
    </location>
    <ligand>
        <name>substrate</name>
    </ligand>
</feature>
<feature type="binding site" evidence="1">
    <location>
        <position position="389"/>
    </location>
    <ligand>
        <name>substrate</name>
    </ligand>
</feature>
<feature type="modified residue" description="N6-(pyridoxal phosphate)lysine" evidence="1">
    <location>
        <position position="250"/>
    </location>
</feature>
<gene>
    <name evidence="1" type="primary">dapL</name>
    <name type="ordered locus">DSY3402</name>
</gene>
<organism>
    <name type="scientific">Desulfitobacterium hafniense (strain Y51)</name>
    <dbReference type="NCBI Taxonomy" id="138119"/>
    <lineage>
        <taxon>Bacteria</taxon>
        <taxon>Bacillati</taxon>
        <taxon>Bacillota</taxon>
        <taxon>Clostridia</taxon>
        <taxon>Eubacteriales</taxon>
        <taxon>Desulfitobacteriaceae</taxon>
        <taxon>Desulfitobacterium</taxon>
    </lineage>
</organism>
<comment type="function">
    <text evidence="1">Involved in the synthesis of meso-diaminopimelate (m-DAP or DL-DAP), required for both lysine and peptidoglycan biosynthesis. Catalyzes the direct conversion of tetrahydrodipicolinate to LL-diaminopimelate.</text>
</comment>
<comment type="catalytic activity">
    <reaction evidence="1">
        <text>(2S,6S)-2,6-diaminopimelate + 2-oxoglutarate = (S)-2,3,4,5-tetrahydrodipicolinate + L-glutamate + H2O + H(+)</text>
        <dbReference type="Rhea" id="RHEA:23988"/>
        <dbReference type="ChEBI" id="CHEBI:15377"/>
        <dbReference type="ChEBI" id="CHEBI:15378"/>
        <dbReference type="ChEBI" id="CHEBI:16810"/>
        <dbReference type="ChEBI" id="CHEBI:16845"/>
        <dbReference type="ChEBI" id="CHEBI:29985"/>
        <dbReference type="ChEBI" id="CHEBI:57609"/>
        <dbReference type="EC" id="2.6.1.83"/>
    </reaction>
</comment>
<comment type="cofactor">
    <cofactor evidence="1">
        <name>pyridoxal 5'-phosphate</name>
        <dbReference type="ChEBI" id="CHEBI:597326"/>
    </cofactor>
</comment>
<comment type="pathway">
    <text evidence="1">Amino-acid biosynthesis; L-lysine biosynthesis via DAP pathway; LL-2,6-diaminopimelate from (S)-tetrahydrodipicolinate (aminotransferase route): step 1/1.</text>
</comment>
<comment type="subunit">
    <text evidence="1">Homodimer.</text>
</comment>
<comment type="similarity">
    <text evidence="1">Belongs to the class-I pyridoxal-phosphate-dependent aminotransferase family. LL-diaminopimelate aminotransferase subfamily.</text>
</comment>
<protein>
    <recommendedName>
        <fullName evidence="1">LL-diaminopimelate aminotransferase</fullName>
        <shortName evidence="1">DAP-AT</shortName>
        <shortName evidence="1">DAP-aminotransferase</shortName>
        <shortName evidence="1">LL-DAP-aminotransferase</shortName>
        <ecNumber evidence="1">2.6.1.83</ecNumber>
    </recommendedName>
</protein>
<keyword id="KW-0032">Aminotransferase</keyword>
<keyword id="KW-0663">Pyridoxal phosphate</keyword>
<keyword id="KW-1185">Reference proteome</keyword>
<keyword id="KW-0808">Transferase</keyword>
<reference key="1">
    <citation type="journal article" date="2006" name="J. Bacteriol.">
        <title>Complete genome sequence of the dehalorespiring bacterium Desulfitobacterium hafniense Y51 and comparison with Dehalococcoides ethenogenes 195.</title>
        <authorList>
            <person name="Nonaka H."/>
            <person name="Keresztes G."/>
            <person name="Shinoda Y."/>
            <person name="Ikenaga Y."/>
            <person name="Abe M."/>
            <person name="Naito K."/>
            <person name="Inatomi K."/>
            <person name="Furukawa K."/>
            <person name="Inui M."/>
            <person name="Yukawa H."/>
        </authorList>
    </citation>
    <scope>NUCLEOTIDE SEQUENCE [LARGE SCALE GENOMIC DNA]</scope>
    <source>
        <strain>Y51</strain>
    </source>
</reference>
<sequence length="411" mass="45926">MAQINENYLKLPGSYLFSEIARRVNEFKVQNPDADIIRLGIGDVTRPLAPVVVEAMKQAVEEMGRAETFRGYGPEQGYDFLIEKIIANDYAPRGVQLGMDEVFVSDGAKSDTANFQEIFGVDNIMAVTDPVYPVYVDSNVMAGRTGNYDIEKGQYGRIIYLPCTEEGDMKPELPTAPVDMIYLCFPNNPTGMTLTKEELKVWVDYARENKAIILFDSAYEAFIREEGVPRSIYEVEGAREVAVEFRSFSKTAGFTGTRCAYTVVPKDIMIYDSTGEGHSLNKLWLRRQTTKFNGVSYPVQAGAAAVYTEEGKKQIQATIDYYMENARIIREGLQEAGFKVFGGVNAPYIWMKTPGTMGSWEFFDKLMTEAHVVGTPGAGFGANGEGFFRLTAFGTRENTEKAIERIKARMK</sequence>